<proteinExistence type="inferred from homology"/>
<organism>
    <name type="scientific">Leifsonia xyli subsp. xyli (strain CTCB07)</name>
    <dbReference type="NCBI Taxonomy" id="281090"/>
    <lineage>
        <taxon>Bacteria</taxon>
        <taxon>Bacillati</taxon>
        <taxon>Actinomycetota</taxon>
        <taxon>Actinomycetes</taxon>
        <taxon>Micrococcales</taxon>
        <taxon>Microbacteriaceae</taxon>
        <taxon>Leifsonia</taxon>
    </lineage>
</organism>
<accession>Q6AFH4</accession>
<gene>
    <name evidence="1" type="primary">panB</name>
    <name type="ordered locus">Lxx10000</name>
</gene>
<name>PANB_LEIXX</name>
<comment type="function">
    <text evidence="1">Catalyzes the reversible reaction in which hydroxymethyl group from 5,10-methylenetetrahydrofolate is transferred onto alpha-ketoisovalerate to form ketopantoate.</text>
</comment>
<comment type="catalytic activity">
    <reaction evidence="1">
        <text>3-methyl-2-oxobutanoate + (6R)-5,10-methylene-5,6,7,8-tetrahydrofolate + H2O = 2-dehydropantoate + (6S)-5,6,7,8-tetrahydrofolate</text>
        <dbReference type="Rhea" id="RHEA:11824"/>
        <dbReference type="ChEBI" id="CHEBI:11561"/>
        <dbReference type="ChEBI" id="CHEBI:11851"/>
        <dbReference type="ChEBI" id="CHEBI:15377"/>
        <dbReference type="ChEBI" id="CHEBI:15636"/>
        <dbReference type="ChEBI" id="CHEBI:57453"/>
        <dbReference type="EC" id="2.1.2.11"/>
    </reaction>
</comment>
<comment type="cofactor">
    <cofactor evidence="1">
        <name>Mg(2+)</name>
        <dbReference type="ChEBI" id="CHEBI:18420"/>
    </cofactor>
    <text evidence="1">Binds 1 Mg(2+) ion per subunit.</text>
</comment>
<comment type="pathway">
    <text evidence="1">Cofactor biosynthesis; (R)-pantothenate biosynthesis; (R)-pantoate from 3-methyl-2-oxobutanoate: step 1/2.</text>
</comment>
<comment type="subunit">
    <text evidence="1">Homodecamer; pentamer of dimers.</text>
</comment>
<comment type="subcellular location">
    <subcellularLocation>
        <location evidence="1">Cytoplasm</location>
    </subcellularLocation>
</comment>
<comment type="similarity">
    <text evidence="1">Belongs to the PanB family.</text>
</comment>
<keyword id="KW-0963">Cytoplasm</keyword>
<keyword id="KW-0460">Magnesium</keyword>
<keyword id="KW-0479">Metal-binding</keyword>
<keyword id="KW-0566">Pantothenate biosynthesis</keyword>
<keyword id="KW-1185">Reference proteome</keyword>
<keyword id="KW-0808">Transferase</keyword>
<sequence>MPSVPSEAPASPSPKRVRTRHFQAAKEEGSRFTGLTSYDTLTAQIFDEAGIDFLLVGDSAANTVLGYDTTLPMTVDELIPLTRAVARAAKRAFVVADLPFGSYETGPQEALRTAVRFMKETGAHAVKLEGGERSAEQIRRIVDAGVPVMGHIGFTPQSEHGLGGHLVQGRGQGAEQVVDDAHAVEEAGAFAVVLEMVPADVAQRVTQELRIPTIGVGAGPHVDGQLLVWTDWAGFTTGRVPRFAKQYADLKDVLTEAARMYRDEVGSGVFPGPEHSF</sequence>
<feature type="chain" id="PRO_0000184854" description="3-methyl-2-oxobutanoate hydroxymethyltransferase">
    <location>
        <begin position="1"/>
        <end position="277"/>
    </location>
</feature>
<feature type="active site" description="Proton acceptor" evidence="1">
    <location>
        <position position="195"/>
    </location>
</feature>
<feature type="binding site" evidence="1">
    <location>
        <begin position="58"/>
        <end position="59"/>
    </location>
    <ligand>
        <name>3-methyl-2-oxobutanoate</name>
        <dbReference type="ChEBI" id="CHEBI:11851"/>
    </ligand>
</feature>
<feature type="binding site" evidence="1">
    <location>
        <position position="58"/>
    </location>
    <ligand>
        <name>Mg(2+)</name>
        <dbReference type="ChEBI" id="CHEBI:18420"/>
    </ligand>
</feature>
<feature type="binding site" evidence="1">
    <location>
        <position position="97"/>
    </location>
    <ligand>
        <name>3-methyl-2-oxobutanoate</name>
        <dbReference type="ChEBI" id="CHEBI:11851"/>
    </ligand>
</feature>
<feature type="binding site" evidence="1">
    <location>
        <position position="97"/>
    </location>
    <ligand>
        <name>Mg(2+)</name>
        <dbReference type="ChEBI" id="CHEBI:18420"/>
    </ligand>
</feature>
<feature type="binding site" evidence="1">
    <location>
        <position position="127"/>
    </location>
    <ligand>
        <name>3-methyl-2-oxobutanoate</name>
        <dbReference type="ChEBI" id="CHEBI:11851"/>
    </ligand>
</feature>
<feature type="binding site" evidence="1">
    <location>
        <position position="129"/>
    </location>
    <ligand>
        <name>Mg(2+)</name>
        <dbReference type="ChEBI" id="CHEBI:18420"/>
    </ligand>
</feature>
<protein>
    <recommendedName>
        <fullName evidence="1">3-methyl-2-oxobutanoate hydroxymethyltransferase</fullName>
        <ecNumber evidence="1">2.1.2.11</ecNumber>
    </recommendedName>
    <alternativeName>
        <fullName evidence="1">Ketopantoate hydroxymethyltransferase</fullName>
        <shortName evidence="1">KPHMT</shortName>
    </alternativeName>
</protein>
<evidence type="ECO:0000255" key="1">
    <source>
        <dbReference type="HAMAP-Rule" id="MF_00156"/>
    </source>
</evidence>
<dbReference type="EC" id="2.1.2.11" evidence="1"/>
<dbReference type="EMBL" id="AE016822">
    <property type="protein sequence ID" value="AAT88871.1"/>
    <property type="molecule type" value="Genomic_DNA"/>
</dbReference>
<dbReference type="SMR" id="Q6AFH4"/>
<dbReference type="STRING" id="281090.Lxx10000"/>
<dbReference type="KEGG" id="lxx:Lxx10000"/>
<dbReference type="eggNOG" id="COG0413">
    <property type="taxonomic scope" value="Bacteria"/>
</dbReference>
<dbReference type="HOGENOM" id="CLU_036645_1_0_11"/>
<dbReference type="UniPathway" id="UPA00028">
    <property type="reaction ID" value="UER00003"/>
</dbReference>
<dbReference type="Proteomes" id="UP000001306">
    <property type="component" value="Chromosome"/>
</dbReference>
<dbReference type="GO" id="GO:0005737">
    <property type="term" value="C:cytoplasm"/>
    <property type="evidence" value="ECO:0007669"/>
    <property type="project" value="UniProtKB-SubCell"/>
</dbReference>
<dbReference type="GO" id="GO:0003864">
    <property type="term" value="F:3-methyl-2-oxobutanoate hydroxymethyltransferase activity"/>
    <property type="evidence" value="ECO:0007669"/>
    <property type="project" value="UniProtKB-UniRule"/>
</dbReference>
<dbReference type="GO" id="GO:0000287">
    <property type="term" value="F:magnesium ion binding"/>
    <property type="evidence" value="ECO:0007669"/>
    <property type="project" value="TreeGrafter"/>
</dbReference>
<dbReference type="GO" id="GO:0015940">
    <property type="term" value="P:pantothenate biosynthetic process"/>
    <property type="evidence" value="ECO:0007669"/>
    <property type="project" value="UniProtKB-UniRule"/>
</dbReference>
<dbReference type="CDD" id="cd06557">
    <property type="entry name" value="KPHMT-like"/>
    <property type="match status" value="1"/>
</dbReference>
<dbReference type="FunFam" id="3.20.20.60:FF:000003">
    <property type="entry name" value="3-methyl-2-oxobutanoate hydroxymethyltransferase"/>
    <property type="match status" value="1"/>
</dbReference>
<dbReference type="Gene3D" id="3.20.20.60">
    <property type="entry name" value="Phosphoenolpyruvate-binding domains"/>
    <property type="match status" value="1"/>
</dbReference>
<dbReference type="HAMAP" id="MF_00156">
    <property type="entry name" value="PanB"/>
    <property type="match status" value="1"/>
</dbReference>
<dbReference type="InterPro" id="IPR003700">
    <property type="entry name" value="Pantoate_hydroxy_MeTrfase"/>
</dbReference>
<dbReference type="InterPro" id="IPR015813">
    <property type="entry name" value="Pyrv/PenolPyrv_kinase-like_dom"/>
</dbReference>
<dbReference type="InterPro" id="IPR040442">
    <property type="entry name" value="Pyrv_kinase-like_dom_sf"/>
</dbReference>
<dbReference type="NCBIfam" id="TIGR00222">
    <property type="entry name" value="panB"/>
    <property type="match status" value="1"/>
</dbReference>
<dbReference type="NCBIfam" id="NF001452">
    <property type="entry name" value="PRK00311.1"/>
    <property type="match status" value="1"/>
</dbReference>
<dbReference type="PANTHER" id="PTHR20881">
    <property type="entry name" value="3-METHYL-2-OXOBUTANOATE HYDROXYMETHYLTRANSFERASE"/>
    <property type="match status" value="1"/>
</dbReference>
<dbReference type="PANTHER" id="PTHR20881:SF0">
    <property type="entry name" value="3-METHYL-2-OXOBUTANOATE HYDROXYMETHYLTRANSFERASE"/>
    <property type="match status" value="1"/>
</dbReference>
<dbReference type="Pfam" id="PF02548">
    <property type="entry name" value="Pantoate_transf"/>
    <property type="match status" value="1"/>
</dbReference>
<dbReference type="PIRSF" id="PIRSF000388">
    <property type="entry name" value="Pantoate_hydroxy_MeTrfase"/>
    <property type="match status" value="1"/>
</dbReference>
<dbReference type="SUPFAM" id="SSF51621">
    <property type="entry name" value="Phosphoenolpyruvate/pyruvate domain"/>
    <property type="match status" value="1"/>
</dbReference>
<reference key="1">
    <citation type="journal article" date="2004" name="Mol. Plant Microbe Interact.">
        <title>The genome sequence of the Gram-positive sugarcane pathogen Leifsonia xyli subsp. xyli.</title>
        <authorList>
            <person name="Monteiro-Vitorello C.B."/>
            <person name="Camargo L.E.A."/>
            <person name="Van Sluys M.A."/>
            <person name="Kitajima J.P."/>
            <person name="Truffi D."/>
            <person name="do Amaral A.M."/>
            <person name="Harakava R."/>
            <person name="de Oliveira J.C.F."/>
            <person name="Wood D."/>
            <person name="de Oliveira M.C."/>
            <person name="Miyaki C.Y."/>
            <person name="Takita M.A."/>
            <person name="da Silva A.C.R."/>
            <person name="Furlan L.R."/>
            <person name="Carraro D.M."/>
            <person name="Camarotte G."/>
            <person name="Almeida N.F. Jr."/>
            <person name="Carrer H."/>
            <person name="Coutinho L.L."/>
            <person name="El-Dorry H.A."/>
            <person name="Ferro M.I.T."/>
            <person name="Gagliardi P.R."/>
            <person name="Giglioti E."/>
            <person name="Goldman M.H.S."/>
            <person name="Goldman G.H."/>
            <person name="Kimura E.T."/>
            <person name="Ferro E.S."/>
            <person name="Kuramae E.E."/>
            <person name="Lemos E.G.M."/>
            <person name="Lemos M.V.F."/>
            <person name="Mauro S.M.Z."/>
            <person name="Machado M.A."/>
            <person name="Marino C.L."/>
            <person name="Menck C.F."/>
            <person name="Nunes L.R."/>
            <person name="Oliveira R.C."/>
            <person name="Pereira G.G."/>
            <person name="Siqueira W."/>
            <person name="de Souza A.A."/>
            <person name="Tsai S.M."/>
            <person name="Zanca A.S."/>
            <person name="Simpson A.J.G."/>
            <person name="Brumbley S.M."/>
            <person name="Setubal J.C."/>
        </authorList>
    </citation>
    <scope>NUCLEOTIDE SEQUENCE [LARGE SCALE GENOMIC DNA]</scope>
    <source>
        <strain>CTCB07</strain>
    </source>
</reference>